<comment type="function">
    <text>Rod linker protein, associated with phycocyanin. Linker polypeptides determine the state of aggregation and the location of the disk-shaped phycobiliprotein units within the phycobilisome and modulate their spectroscopic properties in order to mediate a directed and optimal energy transfer.</text>
</comment>
<comment type="subcellular location">
    <subcellularLocation>
        <location evidence="1">Cellular thylakoid membrane</location>
        <topology evidence="1">Peripheral membrane protein</topology>
        <orientation evidence="1">Cytoplasmic side</orientation>
    </subcellularLocation>
    <text evidence="1">Associated with phycocyanin.</text>
</comment>
<comment type="similarity">
    <text evidence="2">Belongs to the phycobilisome linker protein family.</text>
</comment>
<dbReference type="EMBL" id="X06083">
    <property type="protein sequence ID" value="CAA29462.1"/>
    <property type="molecule type" value="Genomic_DNA"/>
</dbReference>
<dbReference type="PIR" id="S05714">
    <property type="entry name" value="S05714"/>
</dbReference>
<dbReference type="SMR" id="P14879"/>
<dbReference type="GO" id="GO:0030089">
    <property type="term" value="C:phycobilisome"/>
    <property type="evidence" value="ECO:0007669"/>
    <property type="project" value="UniProtKB-KW"/>
</dbReference>
<dbReference type="GO" id="GO:0031676">
    <property type="term" value="C:plasma membrane-derived thylakoid membrane"/>
    <property type="evidence" value="ECO:0007669"/>
    <property type="project" value="UniProtKB-SubCell"/>
</dbReference>
<dbReference type="GO" id="GO:0015979">
    <property type="term" value="P:photosynthesis"/>
    <property type="evidence" value="ECO:0007669"/>
    <property type="project" value="UniProtKB-KW"/>
</dbReference>
<dbReference type="Gene3D" id="1.10.3130.20">
    <property type="entry name" value="Phycobilisome linker domain"/>
    <property type="match status" value="1"/>
</dbReference>
<dbReference type="InterPro" id="IPR001297">
    <property type="entry name" value="PBS_linker_dom"/>
</dbReference>
<dbReference type="InterPro" id="IPR038255">
    <property type="entry name" value="PBS_linker_sf"/>
</dbReference>
<dbReference type="InterPro" id="IPR016470">
    <property type="entry name" value="Phycobilisome"/>
</dbReference>
<dbReference type="PANTHER" id="PTHR34011:SF6">
    <property type="entry name" value="PHYCOBILIPROTEIN APCE"/>
    <property type="match status" value="1"/>
</dbReference>
<dbReference type="PANTHER" id="PTHR34011">
    <property type="entry name" value="PHYCOBILISOME 32.1 KDA LINKER POLYPEPTIDE, PHYCOCYANIN-ASSOCIATED, ROD 2-RELATED"/>
    <property type="match status" value="1"/>
</dbReference>
<dbReference type="Pfam" id="PF00427">
    <property type="entry name" value="PBS_linker_poly"/>
    <property type="match status" value="1"/>
</dbReference>
<dbReference type="PIRSF" id="PIRSF005898">
    <property type="entry name" value="Phycobilisome_CpeC/CpcI"/>
    <property type="match status" value="1"/>
</dbReference>
<dbReference type="PROSITE" id="PS51445">
    <property type="entry name" value="PBS_LINKER"/>
    <property type="match status" value="1"/>
</dbReference>
<protein>
    <recommendedName>
        <fullName>Phycobilisome 31.6 kDa linker polypeptide, phycocyanin-associated, rod</fullName>
        <shortName>L-31.6/R</shortName>
    </recommendedName>
</protein>
<name>PYR4_MICDP</name>
<reference key="1">
    <citation type="journal article" date="1988" name="Mol. Gen. Genet.">
        <title>A multigene family in Calothrix sp. PCC 7601 encodes phycocyanin, the major component of the cyanobacterial light harvesting antenna.</title>
        <authorList>
            <person name="Mazel D."/>
            <person name="Houmard J."/>
            <person name="Tandeau de Marsac N."/>
        </authorList>
    </citation>
    <scope>NUCLEOTIDE SEQUENCE [GENOMIC DNA]</scope>
</reference>
<reference key="2">
    <citation type="journal article" date="1989" name="Nature">
        <title>Adaptive eradication of methionine and cysteine from cyanobacterial light-harvesting proteins.</title>
        <authorList>
            <person name="Mazel D."/>
            <person name="Marliere P."/>
        </authorList>
    </citation>
    <scope>NUCLEOTIDE SEQUENCE [GENOMIC DNA]</scope>
</reference>
<accession>P14879</accession>
<evidence type="ECO:0000250" key="1"/>
<evidence type="ECO:0000255" key="2">
    <source>
        <dbReference type="PROSITE-ProRule" id="PRU00775"/>
    </source>
</evidence>
<keyword id="KW-0042">Antenna complex</keyword>
<keyword id="KW-0472">Membrane</keyword>
<keyword id="KW-0602">Photosynthesis</keyword>
<keyword id="KW-0605">Phycobilisome</keyword>
<keyword id="KW-0793">Thylakoid</keyword>
<organism>
    <name type="scientific">Microchaete diplosiphon</name>
    <name type="common">Fremyella diplosiphon</name>
    <dbReference type="NCBI Taxonomy" id="1197"/>
    <lineage>
        <taxon>Bacteria</taxon>
        <taxon>Bacillati</taxon>
        <taxon>Cyanobacteriota</taxon>
        <taxon>Cyanophyceae</taxon>
        <taxon>Nostocales</taxon>
        <taxon>Rivulariaceae</taxon>
        <taxon>Microchaete</taxon>
    </lineage>
</organism>
<proteinExistence type="inferred from homology"/>
<gene>
    <name type="primary">cpcI3</name>
</gene>
<feature type="chain" id="PRO_0000199215" description="Phycobilisome 31.6 kDa linker polypeptide, phycocyanin-associated, rod">
    <location>
        <begin position="1"/>
        <end position="285"/>
    </location>
</feature>
<feature type="domain" description="PBS-linker" evidence="2">
    <location>
        <begin position="1"/>
        <end position="180"/>
    </location>
</feature>
<sequence length="285" mass="31687">MPITTAASRLGTSAFSNAAPIELRSNTNKAEIAQVIAAIYRQVLGNDYVLQSERLKGLESLLTNGNITVQEFVRQLAKSNLYKSKFFSNNFHSRVTELNFKHLLGRAPYDESEIIYHLDLYQTKGYEADIDSYIDSAEYQTNFADNIVPYYRGFNNQLGQKTVGFTRIFQLYRGYATSDRSQIPGASARLANELARNSASTVIAPAGSNNGFAYRASVKGKTPSTAFQGSQAFGSGRLYRVEVAAISQPAIQVRRINKRSIHRRTIQLFPTSSTSQWQIASVTPL</sequence>